<accession>P76419</accession>
<accession>P94758</accession>
<keyword id="KW-0418">Kinase</keyword>
<keyword id="KW-1185">Reference proteome</keyword>
<keyword id="KW-0808">Transferase</keyword>
<sequence>MSGARLHTLLPELTTRQSVMVVGAAVIDVIADAYALPWRGCDIELKQQSVNVGGCALNIAVALKRLGIEAGNALPLGQGVWAEMIRNRMAKEGLISLIDNAEGDNGWCLALVEPDGERTFMSFSGVENQWNRQWLARLTVAPGSLLYFSGYQLASPCGELLVEWLEELQDVTPFIDFGPRIGDIPDALLARIMACRPLVSLNRQEAEIAAERFALSAEITTLGKQWQEKFAAPLIVRLDKEGAWYFSNDASGCIPAFPTQVVDTIGAGDSHAGGVLAGLASGLPLADAVLLGNAVASWVVGHRGGDCAPTREELLLAHKNV</sequence>
<organism>
    <name type="scientific">Escherichia coli (strain K12)</name>
    <dbReference type="NCBI Taxonomy" id="83333"/>
    <lineage>
        <taxon>Bacteria</taxon>
        <taxon>Pseudomonadati</taxon>
        <taxon>Pseudomonadota</taxon>
        <taxon>Gammaproteobacteria</taxon>
        <taxon>Enterobacterales</taxon>
        <taxon>Enterobacteriaceae</taxon>
        <taxon>Escherichia</taxon>
    </lineage>
</organism>
<reference key="1">
    <citation type="journal article" date="1996" name="DNA Res.">
        <title>A 460-kb DNA sequence of the Escherichia coli K-12 genome corresponding to the 40.1-50.0 min region on the linkage map.</title>
        <authorList>
            <person name="Itoh T."/>
            <person name="Aiba H."/>
            <person name="Baba T."/>
            <person name="Fujita K."/>
            <person name="Hayashi K."/>
            <person name="Inada T."/>
            <person name="Isono K."/>
            <person name="Kasai H."/>
            <person name="Kimura S."/>
            <person name="Kitakawa M."/>
            <person name="Kitagawa M."/>
            <person name="Makino K."/>
            <person name="Miki T."/>
            <person name="Mizobuchi K."/>
            <person name="Mori H."/>
            <person name="Mori T."/>
            <person name="Motomura K."/>
            <person name="Nakade S."/>
            <person name="Nakamura Y."/>
            <person name="Nashimoto H."/>
            <person name="Nishio Y."/>
            <person name="Oshima T."/>
            <person name="Saito N."/>
            <person name="Sampei G."/>
            <person name="Seki Y."/>
            <person name="Sivasundaram S."/>
            <person name="Tagami H."/>
            <person name="Takeda J."/>
            <person name="Takemoto K."/>
            <person name="Wada C."/>
            <person name="Yamamoto Y."/>
            <person name="Horiuchi T."/>
        </authorList>
    </citation>
    <scope>NUCLEOTIDE SEQUENCE [LARGE SCALE GENOMIC DNA]</scope>
    <source>
        <strain>K12 / W3110 / ATCC 27325 / DSM 5911</strain>
    </source>
</reference>
<reference key="2">
    <citation type="journal article" date="1997" name="Science">
        <title>The complete genome sequence of Escherichia coli K-12.</title>
        <authorList>
            <person name="Blattner F.R."/>
            <person name="Plunkett G. III"/>
            <person name="Bloch C.A."/>
            <person name="Perna N.T."/>
            <person name="Burland V."/>
            <person name="Riley M."/>
            <person name="Collado-Vides J."/>
            <person name="Glasner J.D."/>
            <person name="Rode C.K."/>
            <person name="Mayhew G.F."/>
            <person name="Gregor J."/>
            <person name="Davis N.W."/>
            <person name="Kirkpatrick H.A."/>
            <person name="Goeden M.A."/>
            <person name="Rose D.J."/>
            <person name="Mau B."/>
            <person name="Shao Y."/>
        </authorList>
    </citation>
    <scope>NUCLEOTIDE SEQUENCE [LARGE SCALE GENOMIC DNA]</scope>
    <source>
        <strain>K12 / MG1655 / ATCC 47076</strain>
    </source>
</reference>
<reference key="3">
    <citation type="journal article" date="2006" name="Mol. Syst. Biol.">
        <title>Highly accurate genome sequences of Escherichia coli K-12 strains MG1655 and W3110.</title>
        <authorList>
            <person name="Hayashi K."/>
            <person name="Morooka N."/>
            <person name="Yamamoto Y."/>
            <person name="Fujita K."/>
            <person name="Isono K."/>
            <person name="Choi S."/>
            <person name="Ohtsubo E."/>
            <person name="Baba T."/>
            <person name="Wanner B.L."/>
            <person name="Mori H."/>
            <person name="Horiuchi T."/>
        </authorList>
    </citation>
    <scope>NUCLEOTIDE SEQUENCE [LARGE SCALE GENOMIC DNA]</scope>
    <scope>SEQUENCE REVISION</scope>
    <source>
        <strain>K12 / W3110 / ATCC 27325 / DSM 5911</strain>
    </source>
</reference>
<protein>
    <recommendedName>
        <fullName>Uncharacterized sugar kinase YegV</fullName>
        <ecNumber>2.7.1.-</ecNumber>
    </recommendedName>
</protein>
<feature type="chain" id="PRO_0000080146" description="Uncharacterized sugar kinase YegV">
    <location>
        <begin position="1"/>
        <end position="321"/>
    </location>
</feature>
<gene>
    <name type="primary">yegV</name>
    <name type="ordered locus">b2100</name>
    <name type="ordered locus">JW2087</name>
</gene>
<comment type="similarity">
    <text evidence="1">Belongs to the carbohydrate kinase PfkB family.</text>
</comment>
<name>YEGV_ECOLI</name>
<proteinExistence type="inferred from homology"/>
<dbReference type="EC" id="2.7.1.-"/>
<dbReference type="EMBL" id="U00096">
    <property type="protein sequence ID" value="AAC75161.1"/>
    <property type="molecule type" value="Genomic_DNA"/>
</dbReference>
<dbReference type="EMBL" id="AP009048">
    <property type="protein sequence ID" value="BAA15968.2"/>
    <property type="molecule type" value="Genomic_DNA"/>
</dbReference>
<dbReference type="PIR" id="C64977">
    <property type="entry name" value="C64977"/>
</dbReference>
<dbReference type="RefSeq" id="NP_416603.1">
    <property type="nucleotide sequence ID" value="NC_000913.3"/>
</dbReference>
<dbReference type="RefSeq" id="WP_000012001.1">
    <property type="nucleotide sequence ID" value="NZ_LN832404.1"/>
</dbReference>
<dbReference type="SMR" id="P76419"/>
<dbReference type="BioGRID" id="4261162">
    <property type="interactions" value="13"/>
</dbReference>
<dbReference type="DIP" id="DIP-11892N"/>
<dbReference type="FunCoup" id="P76419">
    <property type="interactions" value="49"/>
</dbReference>
<dbReference type="IntAct" id="P76419">
    <property type="interactions" value="13"/>
</dbReference>
<dbReference type="STRING" id="511145.b2100"/>
<dbReference type="PaxDb" id="511145-b2100"/>
<dbReference type="EnsemblBacteria" id="AAC75161">
    <property type="protein sequence ID" value="AAC75161"/>
    <property type="gene ID" value="b2100"/>
</dbReference>
<dbReference type="GeneID" id="946637"/>
<dbReference type="KEGG" id="ecj:JW2087"/>
<dbReference type="KEGG" id="eco:b2100"/>
<dbReference type="KEGG" id="ecoc:C3026_11785"/>
<dbReference type="PATRIC" id="fig|1411691.4.peg.147"/>
<dbReference type="EchoBASE" id="EB3818"/>
<dbReference type="eggNOG" id="COG0524">
    <property type="taxonomic scope" value="Bacteria"/>
</dbReference>
<dbReference type="HOGENOM" id="CLU_027634_7_1_6"/>
<dbReference type="InParanoid" id="P76419"/>
<dbReference type="OMA" id="IGGCALN"/>
<dbReference type="OrthoDB" id="8578462at2"/>
<dbReference type="PhylomeDB" id="P76419"/>
<dbReference type="BioCyc" id="EcoCyc:G7132-MONOMER"/>
<dbReference type="PRO" id="PR:P76419"/>
<dbReference type="Proteomes" id="UP000000625">
    <property type="component" value="Chromosome"/>
</dbReference>
<dbReference type="GO" id="GO:0016301">
    <property type="term" value="F:kinase activity"/>
    <property type="evidence" value="ECO:0007669"/>
    <property type="project" value="UniProtKB-KW"/>
</dbReference>
<dbReference type="GO" id="GO:0006796">
    <property type="term" value="P:phosphate-containing compound metabolic process"/>
    <property type="evidence" value="ECO:0007669"/>
    <property type="project" value="UniProtKB-ARBA"/>
</dbReference>
<dbReference type="CDD" id="cd01944">
    <property type="entry name" value="YegV_kinase_like"/>
    <property type="match status" value="1"/>
</dbReference>
<dbReference type="Gene3D" id="3.40.1190.20">
    <property type="match status" value="1"/>
</dbReference>
<dbReference type="InterPro" id="IPR002173">
    <property type="entry name" value="Carboh/pur_kinase_PfkB_CS"/>
</dbReference>
<dbReference type="InterPro" id="IPR011611">
    <property type="entry name" value="PfkB_dom"/>
</dbReference>
<dbReference type="InterPro" id="IPR002139">
    <property type="entry name" value="Ribo/fructo_kinase"/>
</dbReference>
<dbReference type="InterPro" id="IPR029056">
    <property type="entry name" value="Ribokinase-like"/>
</dbReference>
<dbReference type="PANTHER" id="PTHR10584:SF166">
    <property type="entry name" value="RIBOKINASE"/>
    <property type="match status" value="1"/>
</dbReference>
<dbReference type="PANTHER" id="PTHR10584">
    <property type="entry name" value="SUGAR KINASE"/>
    <property type="match status" value="1"/>
</dbReference>
<dbReference type="Pfam" id="PF00294">
    <property type="entry name" value="PfkB"/>
    <property type="match status" value="1"/>
</dbReference>
<dbReference type="PRINTS" id="PR00990">
    <property type="entry name" value="RIBOKINASE"/>
</dbReference>
<dbReference type="SUPFAM" id="SSF53613">
    <property type="entry name" value="Ribokinase-like"/>
    <property type="match status" value="1"/>
</dbReference>
<dbReference type="PROSITE" id="PS00583">
    <property type="entry name" value="PFKB_KINASES_1"/>
    <property type="match status" value="1"/>
</dbReference>
<dbReference type="PROSITE" id="PS00584">
    <property type="entry name" value="PFKB_KINASES_2"/>
    <property type="match status" value="1"/>
</dbReference>
<evidence type="ECO:0000305" key="1"/>